<accession>P41709</accession>
<feature type="chain" id="PRO_0000133076" description="Uncharacterized 9.4 kDa protein in PE38 3'region">
    <location>
        <begin position="1"/>
        <end position="81"/>
    </location>
</feature>
<organism>
    <name type="scientific">Autographa californica nuclear polyhedrosis virus</name>
    <name type="common">AcMNPV</name>
    <dbReference type="NCBI Taxonomy" id="46015"/>
    <lineage>
        <taxon>Viruses</taxon>
        <taxon>Viruses incertae sedis</taxon>
        <taxon>Naldaviricetes</taxon>
        <taxon>Lefavirales</taxon>
        <taxon>Baculoviridae</taxon>
        <taxon>Alphabaculovirus</taxon>
        <taxon>Alphabaculovirus aucalifornicae</taxon>
    </lineage>
</organism>
<protein>
    <recommendedName>
        <fullName>Uncharacterized 9.4 kDa protein in PE38 3'region</fullName>
    </recommendedName>
</protein>
<dbReference type="EMBL" id="L22858">
    <property type="protein sequence ID" value="AAA66784.1"/>
    <property type="molecule type" value="Genomic_DNA"/>
</dbReference>
<dbReference type="PIR" id="D72869">
    <property type="entry name" value="D72869"/>
</dbReference>
<dbReference type="RefSeq" id="NP_054185.1">
    <property type="nucleotide sequence ID" value="NC_001623.1"/>
</dbReference>
<dbReference type="GeneID" id="1403987"/>
<dbReference type="KEGG" id="vg:1403987"/>
<dbReference type="OrthoDB" id="27961at10239"/>
<dbReference type="Proteomes" id="UP000008292">
    <property type="component" value="Segment"/>
</dbReference>
<dbReference type="InterPro" id="IPR020249">
    <property type="entry name" value="DUF5492"/>
</dbReference>
<dbReference type="Pfam" id="PF17596">
    <property type="entry name" value="DUF5492"/>
    <property type="match status" value="1"/>
</dbReference>
<sequence>MDSSNCIKIDVKYDMPLHYQCDNNADKDVVNAYDTIDVDPNKRFIINHNHEQQQVNETNKQVVDKTFINDTATYNSCIIKI</sequence>
<keyword id="KW-1185">Reference proteome</keyword>
<name>Y154_NPVAC</name>
<organismHost>
    <name type="scientific">Lepidoptera</name>
    <name type="common">butterflies and moths</name>
    <dbReference type="NCBI Taxonomy" id="7088"/>
</organismHost>
<proteinExistence type="predicted"/>
<reference key="1">
    <citation type="journal article" date="1994" name="Virology">
        <title>The complete DNA sequence of Autographa californica nuclear polyhedrosis virus.</title>
        <authorList>
            <person name="Ayres M.D."/>
            <person name="Howard S.C."/>
            <person name="Kuzio J."/>
            <person name="Lopez-Ferber M."/>
            <person name="Possee R.D."/>
        </authorList>
    </citation>
    <scope>NUCLEOTIDE SEQUENCE [LARGE SCALE GENOMIC DNA]</scope>
    <source>
        <strain>C6</strain>
    </source>
</reference>